<proteinExistence type="inferred from homology"/>
<gene>
    <name type="ordered locus">SPJ_1272</name>
</gene>
<evidence type="ECO:0000255" key="1">
    <source>
        <dbReference type="HAMAP-Rule" id="MF_01526"/>
    </source>
</evidence>
<name>Y1272_STRZJ</name>
<feature type="chain" id="PRO_1000185147" description="UPF0342 protein SPJ_1272">
    <location>
        <begin position="1"/>
        <end position="112"/>
    </location>
</feature>
<organism>
    <name type="scientific">Streptococcus pneumoniae (strain JJA)</name>
    <dbReference type="NCBI Taxonomy" id="488222"/>
    <lineage>
        <taxon>Bacteria</taxon>
        <taxon>Bacillati</taxon>
        <taxon>Bacillota</taxon>
        <taxon>Bacilli</taxon>
        <taxon>Lactobacillales</taxon>
        <taxon>Streptococcaceae</taxon>
        <taxon>Streptococcus</taxon>
    </lineage>
</organism>
<dbReference type="EMBL" id="CP000919">
    <property type="protein sequence ID" value="ACO19136.1"/>
    <property type="molecule type" value="Genomic_DNA"/>
</dbReference>
<dbReference type="RefSeq" id="WP_000065988.1">
    <property type="nucleotide sequence ID" value="NC_012466.1"/>
</dbReference>
<dbReference type="SMR" id="C1CEW1"/>
<dbReference type="KEGG" id="sjj:SPJ_1272"/>
<dbReference type="HOGENOM" id="CLU_140243_2_0_9"/>
<dbReference type="Proteomes" id="UP000002206">
    <property type="component" value="Chromosome"/>
</dbReference>
<dbReference type="Gene3D" id="1.20.1500.10">
    <property type="entry name" value="YheA/YmcA-like"/>
    <property type="match status" value="1"/>
</dbReference>
<dbReference type="HAMAP" id="MF_01526">
    <property type="entry name" value="UPF0342"/>
    <property type="match status" value="1"/>
</dbReference>
<dbReference type="InterPro" id="IPR010368">
    <property type="entry name" value="Com_YlbF"/>
</dbReference>
<dbReference type="InterPro" id="IPR023378">
    <property type="entry name" value="YheA/YmcA-like_dom_sf"/>
</dbReference>
<dbReference type="NCBIfam" id="NF010209">
    <property type="entry name" value="PRK13676.1-1"/>
    <property type="match status" value="1"/>
</dbReference>
<dbReference type="Pfam" id="PF06133">
    <property type="entry name" value="Com_YlbF"/>
    <property type="match status" value="1"/>
</dbReference>
<dbReference type="SUPFAM" id="SSF158622">
    <property type="entry name" value="YheA/YmcA-like"/>
    <property type="match status" value="1"/>
</dbReference>
<accession>C1CEW1</accession>
<sequence length="112" mass="12480">MSNIYDSANELSRGLRGLPEYKAVKAAKDAIAADAEASKIFTEYLAFQEEIQKLAHTGQMPDASFQAKMEGFGKQIQGNSLLSEFFTKQQQLAIYLSDIEKIVFEPVSELLK</sequence>
<comment type="similarity">
    <text evidence="1">Belongs to the UPF0342 family.</text>
</comment>
<reference key="1">
    <citation type="journal article" date="2010" name="Genome Biol.">
        <title>Structure and dynamics of the pan-genome of Streptococcus pneumoniae and closely related species.</title>
        <authorList>
            <person name="Donati C."/>
            <person name="Hiller N.L."/>
            <person name="Tettelin H."/>
            <person name="Muzzi A."/>
            <person name="Croucher N.J."/>
            <person name="Angiuoli S.V."/>
            <person name="Oggioni M."/>
            <person name="Dunning Hotopp J.C."/>
            <person name="Hu F.Z."/>
            <person name="Riley D.R."/>
            <person name="Covacci A."/>
            <person name="Mitchell T.J."/>
            <person name="Bentley S.D."/>
            <person name="Kilian M."/>
            <person name="Ehrlich G.D."/>
            <person name="Rappuoli R."/>
            <person name="Moxon E.R."/>
            <person name="Masignani V."/>
        </authorList>
    </citation>
    <scope>NUCLEOTIDE SEQUENCE [LARGE SCALE GENOMIC DNA]</scope>
    <source>
        <strain>JJA</strain>
    </source>
</reference>
<protein>
    <recommendedName>
        <fullName evidence="1">UPF0342 protein SPJ_1272</fullName>
    </recommendedName>
</protein>